<name>HEM6_RHIE6</name>
<feature type="chain" id="PRO_1000119813" description="Oxygen-dependent coproporphyrinogen-III oxidase">
    <location>
        <begin position="1"/>
        <end position="303"/>
    </location>
</feature>
<feature type="region of interest" description="Important for dimerization" evidence="1">
    <location>
        <begin position="268"/>
        <end position="303"/>
    </location>
</feature>
<feature type="active site" description="Proton donor" evidence="1">
    <location>
        <position position="131"/>
    </location>
</feature>
<feature type="binding site" evidence="1">
    <location>
        <position position="117"/>
    </location>
    <ligand>
        <name>substrate</name>
    </ligand>
</feature>
<feature type="binding site" evidence="1">
    <location>
        <position position="121"/>
    </location>
    <ligand>
        <name>a divalent metal cation</name>
        <dbReference type="ChEBI" id="CHEBI:60240"/>
    </ligand>
</feature>
<feature type="binding site" evidence="1">
    <location>
        <position position="131"/>
    </location>
    <ligand>
        <name>a divalent metal cation</name>
        <dbReference type="ChEBI" id="CHEBI:60240"/>
    </ligand>
</feature>
<feature type="binding site" evidence="1">
    <location>
        <begin position="133"/>
        <end position="135"/>
    </location>
    <ligand>
        <name>substrate</name>
    </ligand>
</feature>
<feature type="binding site" evidence="1">
    <location>
        <position position="169"/>
    </location>
    <ligand>
        <name>a divalent metal cation</name>
        <dbReference type="ChEBI" id="CHEBI:60240"/>
    </ligand>
</feature>
<feature type="binding site" evidence="1">
    <location>
        <position position="199"/>
    </location>
    <ligand>
        <name>a divalent metal cation</name>
        <dbReference type="ChEBI" id="CHEBI:60240"/>
    </ligand>
</feature>
<feature type="binding site" evidence="1">
    <location>
        <begin position="286"/>
        <end position="288"/>
    </location>
    <ligand>
        <name>substrate</name>
    </ligand>
</feature>
<feature type="site" description="Important for dimerization" evidence="1">
    <location>
        <position position="199"/>
    </location>
</feature>
<proteinExistence type="inferred from homology"/>
<sequence>MERPELPIGLPDDIEEKKEAARKWFEGLRDTICASFEALEDGLEGPLSDQEPGRFVAKDWSRENGAGGGGRMSMMEGRVFEKVGVHTSTVYGEFSPEFRAQIPGAKDDPRFWASGISLIAHPVNPNVPAVHMNTRMVVTTSRWFGGGADLTPVLSRRRTQEDEDSQLFHKAMEIACRNHAVADYDAYKAWCDDYFFLKHRNEPRGIGGIFYDWLHSSDETGGWNADFAFTRDVGRAFAMVYPKIVRSNFNKLWTEADRDEQLIRRGRYVEFNLLYDRGTIFGLKTGGNVESILSSLPPVVRWP</sequence>
<organism>
    <name type="scientific">Rhizobium etli (strain CIAT 652)</name>
    <dbReference type="NCBI Taxonomy" id="491916"/>
    <lineage>
        <taxon>Bacteria</taxon>
        <taxon>Pseudomonadati</taxon>
        <taxon>Pseudomonadota</taxon>
        <taxon>Alphaproteobacteria</taxon>
        <taxon>Hyphomicrobiales</taxon>
        <taxon>Rhizobiaceae</taxon>
        <taxon>Rhizobium/Agrobacterium group</taxon>
        <taxon>Rhizobium</taxon>
    </lineage>
</organism>
<keyword id="KW-0963">Cytoplasm</keyword>
<keyword id="KW-0350">Heme biosynthesis</keyword>
<keyword id="KW-0479">Metal-binding</keyword>
<keyword id="KW-0560">Oxidoreductase</keyword>
<keyword id="KW-0627">Porphyrin biosynthesis</keyword>
<evidence type="ECO:0000255" key="1">
    <source>
        <dbReference type="HAMAP-Rule" id="MF_00333"/>
    </source>
</evidence>
<comment type="function">
    <text evidence="1">Involved in the heme biosynthesis. Catalyzes the aerobic oxidative decarboxylation of propionate groups of rings A and B of coproporphyrinogen-III to yield the vinyl groups in protoporphyrinogen-IX.</text>
</comment>
<comment type="catalytic activity">
    <reaction evidence="1">
        <text>coproporphyrinogen III + O2 + 2 H(+) = protoporphyrinogen IX + 2 CO2 + 2 H2O</text>
        <dbReference type="Rhea" id="RHEA:18257"/>
        <dbReference type="ChEBI" id="CHEBI:15377"/>
        <dbReference type="ChEBI" id="CHEBI:15378"/>
        <dbReference type="ChEBI" id="CHEBI:15379"/>
        <dbReference type="ChEBI" id="CHEBI:16526"/>
        <dbReference type="ChEBI" id="CHEBI:57307"/>
        <dbReference type="ChEBI" id="CHEBI:57309"/>
        <dbReference type="EC" id="1.3.3.3"/>
    </reaction>
</comment>
<comment type="cofactor">
    <cofactor evidence="1">
        <name>a divalent metal cation</name>
        <dbReference type="ChEBI" id="CHEBI:60240"/>
    </cofactor>
</comment>
<comment type="pathway">
    <text evidence="1">Porphyrin-containing compound metabolism; protoporphyrin-IX biosynthesis; protoporphyrinogen-IX from coproporphyrinogen-III (O2 route): step 1/1.</text>
</comment>
<comment type="subunit">
    <text evidence="1">Homodimer.</text>
</comment>
<comment type="subcellular location">
    <subcellularLocation>
        <location evidence="1">Cytoplasm</location>
    </subcellularLocation>
</comment>
<comment type="similarity">
    <text evidence="1">Belongs to the aerobic coproporphyrinogen-III oxidase family.</text>
</comment>
<reference key="1">
    <citation type="journal article" date="2010" name="Appl. Environ. Microbiol.">
        <title>Conserved symbiotic plasmid DNA sequences in the multireplicon pangenomic structure of Rhizobium etli.</title>
        <authorList>
            <person name="Gonzalez V."/>
            <person name="Acosta J.L."/>
            <person name="Santamaria R.I."/>
            <person name="Bustos P."/>
            <person name="Fernandez J.L."/>
            <person name="Hernandez Gonzalez I.L."/>
            <person name="Diaz R."/>
            <person name="Flores M."/>
            <person name="Palacios R."/>
            <person name="Mora J."/>
            <person name="Davila G."/>
        </authorList>
    </citation>
    <scope>NUCLEOTIDE SEQUENCE [LARGE SCALE GENOMIC DNA]</scope>
    <source>
        <strain>CIAT 652</strain>
    </source>
</reference>
<protein>
    <recommendedName>
        <fullName evidence="1">Oxygen-dependent coproporphyrinogen-III oxidase</fullName>
        <shortName evidence="1">CPO</shortName>
        <shortName evidence="1">Coprogen oxidase</shortName>
        <shortName evidence="1">Coproporphyrinogenase</shortName>
        <ecNumber evidence="1">1.3.3.3</ecNumber>
    </recommendedName>
</protein>
<dbReference type="EC" id="1.3.3.3" evidence="1"/>
<dbReference type="EMBL" id="CP001074">
    <property type="protein sequence ID" value="ACE92154.1"/>
    <property type="molecule type" value="Genomic_DNA"/>
</dbReference>
<dbReference type="SMR" id="B3PV29"/>
<dbReference type="KEGG" id="rec:RHECIAT_CH0003206"/>
<dbReference type="eggNOG" id="COG0408">
    <property type="taxonomic scope" value="Bacteria"/>
</dbReference>
<dbReference type="HOGENOM" id="CLU_026169_0_1_5"/>
<dbReference type="UniPathway" id="UPA00251">
    <property type="reaction ID" value="UER00322"/>
</dbReference>
<dbReference type="Proteomes" id="UP000008817">
    <property type="component" value="Chromosome"/>
</dbReference>
<dbReference type="GO" id="GO:0005737">
    <property type="term" value="C:cytoplasm"/>
    <property type="evidence" value="ECO:0007669"/>
    <property type="project" value="UniProtKB-SubCell"/>
</dbReference>
<dbReference type="GO" id="GO:0004109">
    <property type="term" value="F:coproporphyrinogen oxidase activity"/>
    <property type="evidence" value="ECO:0007669"/>
    <property type="project" value="UniProtKB-UniRule"/>
</dbReference>
<dbReference type="GO" id="GO:0046872">
    <property type="term" value="F:metal ion binding"/>
    <property type="evidence" value="ECO:0007669"/>
    <property type="project" value="UniProtKB-KW"/>
</dbReference>
<dbReference type="GO" id="GO:0042803">
    <property type="term" value="F:protein homodimerization activity"/>
    <property type="evidence" value="ECO:0000250"/>
    <property type="project" value="UniProtKB"/>
</dbReference>
<dbReference type="GO" id="GO:0006782">
    <property type="term" value="P:protoporphyrinogen IX biosynthetic process"/>
    <property type="evidence" value="ECO:0007669"/>
    <property type="project" value="UniProtKB-UniRule"/>
</dbReference>
<dbReference type="FunFam" id="3.40.1500.10:FF:000005">
    <property type="entry name" value="Oxygen-dependent coproporphyrinogen-III oxidase"/>
    <property type="match status" value="1"/>
</dbReference>
<dbReference type="Gene3D" id="3.40.1500.10">
    <property type="entry name" value="Coproporphyrinogen III oxidase, aerobic"/>
    <property type="match status" value="1"/>
</dbReference>
<dbReference type="HAMAP" id="MF_00333">
    <property type="entry name" value="Coprogen_oxidas"/>
    <property type="match status" value="1"/>
</dbReference>
<dbReference type="InterPro" id="IPR001260">
    <property type="entry name" value="Coprogen_oxidase_aer"/>
</dbReference>
<dbReference type="InterPro" id="IPR036406">
    <property type="entry name" value="Coprogen_oxidase_aer_sf"/>
</dbReference>
<dbReference type="InterPro" id="IPR018375">
    <property type="entry name" value="Coprogen_oxidase_CS"/>
</dbReference>
<dbReference type="NCBIfam" id="NF003727">
    <property type="entry name" value="PRK05330.1"/>
    <property type="match status" value="1"/>
</dbReference>
<dbReference type="PANTHER" id="PTHR10755">
    <property type="entry name" value="COPROPORPHYRINOGEN III OXIDASE, MITOCHONDRIAL"/>
    <property type="match status" value="1"/>
</dbReference>
<dbReference type="PANTHER" id="PTHR10755:SF0">
    <property type="entry name" value="OXYGEN-DEPENDENT COPROPORPHYRINOGEN-III OXIDASE, MITOCHONDRIAL"/>
    <property type="match status" value="1"/>
</dbReference>
<dbReference type="Pfam" id="PF01218">
    <property type="entry name" value="Coprogen_oxidas"/>
    <property type="match status" value="1"/>
</dbReference>
<dbReference type="PIRSF" id="PIRSF000166">
    <property type="entry name" value="Coproporphyri_ox"/>
    <property type="match status" value="1"/>
</dbReference>
<dbReference type="PRINTS" id="PR00073">
    <property type="entry name" value="COPRGNOXDASE"/>
</dbReference>
<dbReference type="SUPFAM" id="SSF102886">
    <property type="entry name" value="Coproporphyrinogen III oxidase"/>
    <property type="match status" value="1"/>
</dbReference>
<dbReference type="PROSITE" id="PS01021">
    <property type="entry name" value="COPROGEN_OXIDASE"/>
    <property type="match status" value="1"/>
</dbReference>
<accession>B3PV29</accession>
<gene>
    <name evidence="1" type="primary">hemF</name>
    <name type="ordered locus">RHECIAT_CH0003206</name>
</gene>